<evidence type="ECO:0000250" key="1">
    <source>
        <dbReference type="UniProtKB" id="Q9H190"/>
    </source>
</evidence>
<evidence type="ECO:0000255" key="2">
    <source>
        <dbReference type="PROSITE-ProRule" id="PRU00143"/>
    </source>
</evidence>
<evidence type="ECO:0000269" key="3">
    <source>
    </source>
</evidence>
<evidence type="ECO:0000312" key="4">
    <source>
        <dbReference type="EMBL" id="AAH99095.1"/>
    </source>
</evidence>
<dbReference type="EMBL" id="AABR07054304">
    <property type="status" value="NOT_ANNOTATED_CDS"/>
    <property type="molecule type" value="Genomic_DNA"/>
</dbReference>
<dbReference type="EMBL" id="AABR07054305">
    <property type="status" value="NOT_ANNOTATED_CDS"/>
    <property type="molecule type" value="Genomic_DNA"/>
</dbReference>
<dbReference type="EMBL" id="CH474050">
    <property type="protein sequence ID" value="EDL86113.1"/>
    <property type="molecule type" value="Genomic_DNA"/>
</dbReference>
<dbReference type="EMBL" id="BC099095">
    <property type="protein sequence ID" value="AAH99095.1"/>
    <property type="molecule type" value="mRNA"/>
</dbReference>
<dbReference type="RefSeq" id="NP_001020863.1">
    <property type="nucleotide sequence ID" value="NM_001025692.1"/>
</dbReference>
<dbReference type="RefSeq" id="XP_017447262.1">
    <property type="nucleotide sequence ID" value="XM_017591773.3"/>
</dbReference>
<dbReference type="SMR" id="Q4KLN0"/>
<dbReference type="FunCoup" id="Q4KLN0">
    <property type="interactions" value="34"/>
</dbReference>
<dbReference type="STRING" id="10116.ENSRNOP00000012690"/>
<dbReference type="PhosphoSitePlus" id="Q4KLN0"/>
<dbReference type="PaxDb" id="10116-ENSRNOP00000012690"/>
<dbReference type="Ensembl" id="ENSRNOT00000012690.5">
    <property type="protein sequence ID" value="ENSRNOP00000012690.3"/>
    <property type="gene ID" value="ENSRNOG00000009528.5"/>
</dbReference>
<dbReference type="GeneID" id="311532"/>
<dbReference type="KEGG" id="rno:311532"/>
<dbReference type="UCSC" id="RGD:1307709">
    <property type="organism name" value="rat"/>
</dbReference>
<dbReference type="AGR" id="RGD:1307709"/>
<dbReference type="CTD" id="27111"/>
<dbReference type="RGD" id="1307709">
    <property type="gene designation" value="Sdcbp2"/>
</dbReference>
<dbReference type="eggNOG" id="ENOG502S0HE">
    <property type="taxonomic scope" value="Eukaryota"/>
</dbReference>
<dbReference type="GeneTree" id="ENSGT00940000161179"/>
<dbReference type="HOGENOM" id="CLU_059870_0_0_1"/>
<dbReference type="InParanoid" id="Q4KLN0"/>
<dbReference type="OrthoDB" id="52274at9989"/>
<dbReference type="PhylomeDB" id="Q4KLN0"/>
<dbReference type="TreeFam" id="TF327131"/>
<dbReference type="PRO" id="PR:Q4KLN0"/>
<dbReference type="Proteomes" id="UP000002494">
    <property type="component" value="Chromosome 3"/>
</dbReference>
<dbReference type="Proteomes" id="UP000234681">
    <property type="component" value="Chromosome 3"/>
</dbReference>
<dbReference type="Bgee" id="ENSRNOG00000009528">
    <property type="expression patterns" value="Expressed in duodenum and 14 other cell types or tissues"/>
</dbReference>
<dbReference type="GO" id="GO:0005737">
    <property type="term" value="C:cytoplasm"/>
    <property type="evidence" value="ECO:0000266"/>
    <property type="project" value="RGD"/>
</dbReference>
<dbReference type="GO" id="GO:0005829">
    <property type="term" value="C:cytosol"/>
    <property type="evidence" value="ECO:0007669"/>
    <property type="project" value="Ensembl"/>
</dbReference>
<dbReference type="GO" id="GO:0005794">
    <property type="term" value="C:Golgi apparatus"/>
    <property type="evidence" value="ECO:0007669"/>
    <property type="project" value="Ensembl"/>
</dbReference>
<dbReference type="GO" id="GO:0016607">
    <property type="term" value="C:nuclear speck"/>
    <property type="evidence" value="ECO:0000266"/>
    <property type="project" value="RGD"/>
</dbReference>
<dbReference type="GO" id="GO:0005730">
    <property type="term" value="C:nucleolus"/>
    <property type="evidence" value="ECO:0000266"/>
    <property type="project" value="RGD"/>
</dbReference>
<dbReference type="GO" id="GO:0005886">
    <property type="term" value="C:plasma membrane"/>
    <property type="evidence" value="ECO:0000266"/>
    <property type="project" value="RGD"/>
</dbReference>
<dbReference type="GO" id="GO:0042802">
    <property type="term" value="F:identical protein binding"/>
    <property type="evidence" value="ECO:0000266"/>
    <property type="project" value="RGD"/>
</dbReference>
<dbReference type="GO" id="GO:0005546">
    <property type="term" value="F:phosphatidylinositol-4,5-bisphosphate binding"/>
    <property type="evidence" value="ECO:0000266"/>
    <property type="project" value="RGD"/>
</dbReference>
<dbReference type="GO" id="GO:0046982">
    <property type="term" value="F:protein heterodimerization activity"/>
    <property type="evidence" value="ECO:0000266"/>
    <property type="project" value="RGD"/>
</dbReference>
<dbReference type="GO" id="GO:0042803">
    <property type="term" value="F:protein homodimerization activity"/>
    <property type="evidence" value="ECO:0000266"/>
    <property type="project" value="RGD"/>
</dbReference>
<dbReference type="GO" id="GO:0008283">
    <property type="term" value="P:cell population proliferation"/>
    <property type="evidence" value="ECO:0000266"/>
    <property type="project" value="RGD"/>
</dbReference>
<dbReference type="CDD" id="cd06721">
    <property type="entry name" value="PDZ1_syntenin-like"/>
    <property type="match status" value="1"/>
</dbReference>
<dbReference type="CDD" id="cd06794">
    <property type="entry name" value="PDZ2_syntenin-like"/>
    <property type="match status" value="1"/>
</dbReference>
<dbReference type="FunFam" id="2.30.42.10:FF:000043">
    <property type="entry name" value="Syntenin-1 isoform X1"/>
    <property type="match status" value="1"/>
</dbReference>
<dbReference type="FunFam" id="2.30.42.10:FF:000065">
    <property type="entry name" value="syntenin-1 isoform X1"/>
    <property type="match status" value="1"/>
</dbReference>
<dbReference type="Gene3D" id="2.30.42.10">
    <property type="match status" value="2"/>
</dbReference>
<dbReference type="InterPro" id="IPR051230">
    <property type="entry name" value="APP-Binding"/>
</dbReference>
<dbReference type="InterPro" id="IPR001478">
    <property type="entry name" value="PDZ"/>
</dbReference>
<dbReference type="InterPro" id="IPR036034">
    <property type="entry name" value="PDZ_sf"/>
</dbReference>
<dbReference type="PANTHER" id="PTHR12345">
    <property type="entry name" value="SYNTENIN RELATED"/>
    <property type="match status" value="1"/>
</dbReference>
<dbReference type="PANTHER" id="PTHR12345:SF13">
    <property type="entry name" value="SYNTENIN-2"/>
    <property type="match status" value="1"/>
</dbReference>
<dbReference type="Pfam" id="PF00595">
    <property type="entry name" value="PDZ"/>
    <property type="match status" value="2"/>
</dbReference>
<dbReference type="SMART" id="SM00228">
    <property type="entry name" value="PDZ"/>
    <property type="match status" value="2"/>
</dbReference>
<dbReference type="SUPFAM" id="SSF50156">
    <property type="entry name" value="PDZ domain-like"/>
    <property type="match status" value="2"/>
</dbReference>
<dbReference type="PROSITE" id="PS50106">
    <property type="entry name" value="PDZ"/>
    <property type="match status" value="2"/>
</dbReference>
<protein>
    <recommendedName>
        <fullName>Syntenin-2</fullName>
    </recommendedName>
    <alternativeName>
        <fullName>Syndecan-binding protein 2</fullName>
    </alternativeName>
</protein>
<gene>
    <name type="primary">Sdcbp2</name>
</gene>
<comment type="function">
    <text evidence="1">Binds phosphatidylinositol 4,5-bisphosphate (PIP2). May play a role in the organization of nuclear PIP2, cell division and cell survival.</text>
</comment>
<comment type="subunit">
    <text evidence="1 3">Monomer and homodimer. Interacts with SDCBP (PubMed:11152476). Interacts with TM4SF1.</text>
</comment>
<comment type="subcellular location">
    <subcellularLocation>
        <location evidence="1">Cytoplasm</location>
    </subcellularLocation>
    <subcellularLocation>
        <location evidence="1">Nucleus</location>
        <location evidence="1">Nucleolus</location>
    </subcellularLocation>
    <subcellularLocation>
        <location evidence="1">Nucleus</location>
        <location evidence="1">Nucleoplasm</location>
    </subcellularLocation>
    <subcellularLocation>
        <location evidence="1">Cell membrane</location>
    </subcellularLocation>
    <subcellularLocation>
        <location evidence="1">Nucleus speckle</location>
    </subcellularLocation>
    <text evidence="1">Associates with intracellular membranes and enriched in the apical region of the cell and in intracellular compartments. Colocalizes with TM4SF1 in the apical region of the cell. Predominantly targeted to nuclear PIP2 pools. Shuttles between several subcellular compartments. PIP2 plays an important role in the distribution of SDCBP2.</text>
</comment>
<comment type="domain">
    <text evidence="1">The two PDZ domains mediate the interaction with phosphatidylinositol 4,5-bisphosphate (PIP2) and target SDCBP2 to the plasma membranes and nucleoli, PIP2-rich regions.</text>
</comment>
<proteinExistence type="evidence at protein level"/>
<sequence>MSVLYPSLEDLKVGQVIQAQARASPMMPTVMPTLPASMASAPPLSELYPNLAELESYMGLSLSSQEVQKNLSQIPDGDNMVITSPGPGQVTAPVSGNDLGVLRAEIKPGVREIHLCKDERGKTGLRLQAVDKGLFVQLVQANTPASLVGLRFGDQILQIDGCDCAGWSTHKAQKALKKASAEKIVMVVRDRPFQRTVTMHKDSSGQVGFFIKKGKIVSVVKGSSAARNGLLTNHYVCEVNGQNVIGLKDKKIIEILTTAGNVITLTIIPTVIYEHMIKKLSPLLLHHTMDHSIPDT</sequence>
<accession>Q4KLN0</accession>
<feature type="chain" id="PRO_0000441797" description="Syntenin-2">
    <location>
        <begin position="1"/>
        <end position="296"/>
    </location>
</feature>
<feature type="domain" description="PDZ 1" evidence="2">
    <location>
        <begin position="112"/>
        <end position="191"/>
    </location>
</feature>
<feature type="domain" description="PDZ 2" evidence="2">
    <location>
        <begin position="196"/>
        <end position="271"/>
    </location>
</feature>
<name>SDCB2_RAT</name>
<keyword id="KW-1003">Cell membrane</keyword>
<keyword id="KW-0963">Cytoplasm</keyword>
<keyword id="KW-0446">Lipid-binding</keyword>
<keyword id="KW-0472">Membrane</keyword>
<keyword id="KW-0539">Nucleus</keyword>
<keyword id="KW-1185">Reference proteome</keyword>
<keyword id="KW-0677">Repeat</keyword>
<organism evidence="4">
    <name type="scientific">Rattus norvegicus</name>
    <name type="common">Rat</name>
    <dbReference type="NCBI Taxonomy" id="10116"/>
    <lineage>
        <taxon>Eukaryota</taxon>
        <taxon>Metazoa</taxon>
        <taxon>Chordata</taxon>
        <taxon>Craniata</taxon>
        <taxon>Vertebrata</taxon>
        <taxon>Euteleostomi</taxon>
        <taxon>Mammalia</taxon>
        <taxon>Eutheria</taxon>
        <taxon>Euarchontoglires</taxon>
        <taxon>Glires</taxon>
        <taxon>Rodentia</taxon>
        <taxon>Myomorpha</taxon>
        <taxon>Muroidea</taxon>
        <taxon>Muridae</taxon>
        <taxon>Murinae</taxon>
        <taxon>Rattus</taxon>
    </lineage>
</organism>
<reference key="1">
    <citation type="journal article" date="2004" name="Nature">
        <title>Genome sequence of the Brown Norway rat yields insights into mammalian evolution.</title>
        <authorList>
            <person name="Gibbs R.A."/>
            <person name="Weinstock G.M."/>
            <person name="Metzker M.L."/>
            <person name="Muzny D.M."/>
            <person name="Sodergren E.J."/>
            <person name="Scherer S."/>
            <person name="Scott G."/>
            <person name="Steffen D."/>
            <person name="Worley K.C."/>
            <person name="Burch P.E."/>
            <person name="Okwuonu G."/>
            <person name="Hines S."/>
            <person name="Lewis L."/>
            <person name="Deramo C."/>
            <person name="Delgado O."/>
            <person name="Dugan-Rocha S."/>
            <person name="Miner G."/>
            <person name="Morgan M."/>
            <person name="Hawes A."/>
            <person name="Gill R."/>
            <person name="Holt R.A."/>
            <person name="Adams M.D."/>
            <person name="Amanatides P.G."/>
            <person name="Baden-Tillson H."/>
            <person name="Barnstead M."/>
            <person name="Chin S."/>
            <person name="Evans C.A."/>
            <person name="Ferriera S."/>
            <person name="Fosler C."/>
            <person name="Glodek A."/>
            <person name="Gu Z."/>
            <person name="Jennings D."/>
            <person name="Kraft C.L."/>
            <person name="Nguyen T."/>
            <person name="Pfannkoch C.M."/>
            <person name="Sitter C."/>
            <person name="Sutton G.G."/>
            <person name="Venter J.C."/>
            <person name="Woodage T."/>
            <person name="Smith D."/>
            <person name="Lee H.-M."/>
            <person name="Gustafson E."/>
            <person name="Cahill P."/>
            <person name="Kana A."/>
            <person name="Doucette-Stamm L."/>
            <person name="Weinstock K."/>
            <person name="Fechtel K."/>
            <person name="Weiss R.B."/>
            <person name="Dunn D.M."/>
            <person name="Green E.D."/>
            <person name="Blakesley R.W."/>
            <person name="Bouffard G.G."/>
            <person name="De Jong P.J."/>
            <person name="Osoegawa K."/>
            <person name="Zhu B."/>
            <person name="Marra M."/>
            <person name="Schein J."/>
            <person name="Bosdet I."/>
            <person name="Fjell C."/>
            <person name="Jones S."/>
            <person name="Krzywinski M."/>
            <person name="Mathewson C."/>
            <person name="Siddiqui A."/>
            <person name="Wye N."/>
            <person name="McPherson J."/>
            <person name="Zhao S."/>
            <person name="Fraser C.M."/>
            <person name="Shetty J."/>
            <person name="Shatsman S."/>
            <person name="Geer K."/>
            <person name="Chen Y."/>
            <person name="Abramzon S."/>
            <person name="Nierman W.C."/>
            <person name="Havlak P.H."/>
            <person name="Chen R."/>
            <person name="Durbin K.J."/>
            <person name="Egan A."/>
            <person name="Ren Y."/>
            <person name="Song X.-Z."/>
            <person name="Li B."/>
            <person name="Liu Y."/>
            <person name="Qin X."/>
            <person name="Cawley S."/>
            <person name="Cooney A.J."/>
            <person name="D'Souza L.M."/>
            <person name="Martin K."/>
            <person name="Wu J.Q."/>
            <person name="Gonzalez-Garay M.L."/>
            <person name="Jackson A.R."/>
            <person name="Kalafus K.J."/>
            <person name="McLeod M.P."/>
            <person name="Milosavljevic A."/>
            <person name="Virk D."/>
            <person name="Volkov A."/>
            <person name="Wheeler D.A."/>
            <person name="Zhang Z."/>
            <person name="Bailey J.A."/>
            <person name="Eichler E.E."/>
            <person name="Tuzun E."/>
            <person name="Birney E."/>
            <person name="Mongin E."/>
            <person name="Ureta-Vidal A."/>
            <person name="Woodwark C."/>
            <person name="Zdobnov E."/>
            <person name="Bork P."/>
            <person name="Suyama M."/>
            <person name="Torrents D."/>
            <person name="Alexandersson M."/>
            <person name="Trask B.J."/>
            <person name="Young J.M."/>
            <person name="Huang H."/>
            <person name="Wang H."/>
            <person name="Xing H."/>
            <person name="Daniels S."/>
            <person name="Gietzen D."/>
            <person name="Schmidt J."/>
            <person name="Stevens K."/>
            <person name="Vitt U."/>
            <person name="Wingrove J."/>
            <person name="Camara F."/>
            <person name="Mar Alba M."/>
            <person name="Abril J.F."/>
            <person name="Guigo R."/>
            <person name="Smit A."/>
            <person name="Dubchak I."/>
            <person name="Rubin E.M."/>
            <person name="Couronne O."/>
            <person name="Poliakov A."/>
            <person name="Huebner N."/>
            <person name="Ganten D."/>
            <person name="Goesele C."/>
            <person name="Hummel O."/>
            <person name="Kreitler T."/>
            <person name="Lee Y.-A."/>
            <person name="Monti J."/>
            <person name="Schulz H."/>
            <person name="Zimdahl H."/>
            <person name="Himmelbauer H."/>
            <person name="Lehrach H."/>
            <person name="Jacob H.J."/>
            <person name="Bromberg S."/>
            <person name="Gullings-Handley J."/>
            <person name="Jensen-Seaman M.I."/>
            <person name="Kwitek A.E."/>
            <person name="Lazar J."/>
            <person name="Pasko D."/>
            <person name="Tonellato P.J."/>
            <person name="Twigger S."/>
            <person name="Ponting C.P."/>
            <person name="Duarte J.M."/>
            <person name="Rice S."/>
            <person name="Goodstadt L."/>
            <person name="Beatson S.A."/>
            <person name="Emes R.D."/>
            <person name="Winter E.E."/>
            <person name="Webber C."/>
            <person name="Brandt P."/>
            <person name="Nyakatura G."/>
            <person name="Adetobi M."/>
            <person name="Chiaromonte F."/>
            <person name="Elnitski L."/>
            <person name="Eswara P."/>
            <person name="Hardison R.C."/>
            <person name="Hou M."/>
            <person name="Kolbe D."/>
            <person name="Makova K."/>
            <person name="Miller W."/>
            <person name="Nekrutenko A."/>
            <person name="Riemer C."/>
            <person name="Schwartz S."/>
            <person name="Taylor J."/>
            <person name="Yang S."/>
            <person name="Zhang Y."/>
            <person name="Lindpaintner K."/>
            <person name="Andrews T.D."/>
            <person name="Caccamo M."/>
            <person name="Clamp M."/>
            <person name="Clarke L."/>
            <person name="Curwen V."/>
            <person name="Durbin R.M."/>
            <person name="Eyras E."/>
            <person name="Searle S.M."/>
            <person name="Cooper G.M."/>
            <person name="Batzoglou S."/>
            <person name="Brudno M."/>
            <person name="Sidow A."/>
            <person name="Stone E.A."/>
            <person name="Payseur B.A."/>
            <person name="Bourque G."/>
            <person name="Lopez-Otin C."/>
            <person name="Puente X.S."/>
            <person name="Chakrabarti K."/>
            <person name="Chatterji S."/>
            <person name="Dewey C."/>
            <person name="Pachter L."/>
            <person name="Bray N."/>
            <person name="Yap V.B."/>
            <person name="Caspi A."/>
            <person name="Tesler G."/>
            <person name="Pevzner P.A."/>
            <person name="Haussler D."/>
            <person name="Roskin K.M."/>
            <person name="Baertsch R."/>
            <person name="Clawson H."/>
            <person name="Furey T.S."/>
            <person name="Hinrichs A.S."/>
            <person name="Karolchik D."/>
            <person name="Kent W.J."/>
            <person name="Rosenbloom K.R."/>
            <person name="Trumbower H."/>
            <person name="Weirauch M."/>
            <person name="Cooper D.N."/>
            <person name="Stenson P.D."/>
            <person name="Ma B."/>
            <person name="Brent M."/>
            <person name="Arumugam M."/>
            <person name="Shteynberg D."/>
            <person name="Copley R.R."/>
            <person name="Taylor M.S."/>
            <person name="Riethman H."/>
            <person name="Mudunuri U."/>
            <person name="Peterson J."/>
            <person name="Guyer M."/>
            <person name="Felsenfeld A."/>
            <person name="Old S."/>
            <person name="Mockrin S."/>
            <person name="Collins F.S."/>
        </authorList>
    </citation>
    <scope>NUCLEOTIDE SEQUENCE [LARGE SCALE GENOMIC DNA]</scope>
    <source>
        <strain>Brown Norway</strain>
    </source>
</reference>
<reference key="2">
    <citation type="submission" date="2005-09" db="EMBL/GenBank/DDBJ databases">
        <authorList>
            <person name="Mural R.J."/>
            <person name="Adams M.D."/>
            <person name="Myers E.W."/>
            <person name="Smith H.O."/>
            <person name="Venter J.C."/>
        </authorList>
    </citation>
    <scope>NUCLEOTIDE SEQUENCE [LARGE SCALE GENOMIC DNA]</scope>
</reference>
<reference key="3">
    <citation type="journal article" date="2004" name="Genome Res.">
        <title>The status, quality, and expansion of the NIH full-length cDNA project: the Mammalian Gene Collection (MGC).</title>
        <authorList>
            <consortium name="The MGC Project Team"/>
        </authorList>
    </citation>
    <scope>NUCLEOTIDE SEQUENCE [LARGE SCALE MRNA]</scope>
    <source>
        <tissue evidence="4">Placenta</tissue>
    </source>
</reference>
<reference key="4">
    <citation type="journal article" date="2001" name="J. Biol. Chem.">
        <title>The neural cell recognition molecule neurofascin interacts with syntenin-1 but not with syntenin-2, both of which reveal self-associating activity.</title>
        <authorList>
            <person name="Koroll M."/>
            <person name="Rathjen F.G."/>
            <person name="Volkmer H."/>
        </authorList>
    </citation>
    <scope>INTERACTION WITH SDCBP</scope>
    <source>
        <tissue>Fetal brain</tissue>
    </source>
</reference>